<gene>
    <name evidence="1" type="primary">rppH</name>
    <name evidence="1" type="synonym">nudH</name>
    <name type="ordered locus">NMC1601</name>
</gene>
<reference key="1">
    <citation type="journal article" date="2007" name="PLoS Genet.">
        <title>Meningococcal genetic variation mechanisms viewed through comparative analysis of serogroup C strain FAM18.</title>
        <authorList>
            <person name="Bentley S.D."/>
            <person name="Vernikos G.S."/>
            <person name="Snyder L.A.S."/>
            <person name="Churcher C."/>
            <person name="Arrowsmith C."/>
            <person name="Chillingworth T."/>
            <person name="Cronin A."/>
            <person name="Davis P.H."/>
            <person name="Holroyd N.E."/>
            <person name="Jagels K."/>
            <person name="Maddison M."/>
            <person name="Moule S."/>
            <person name="Rabbinowitsch E."/>
            <person name="Sharp S."/>
            <person name="Unwin L."/>
            <person name="Whitehead S."/>
            <person name="Quail M.A."/>
            <person name="Achtman M."/>
            <person name="Barrell B.G."/>
            <person name="Saunders N.J."/>
            <person name="Parkhill J."/>
        </authorList>
    </citation>
    <scope>NUCLEOTIDE SEQUENCE [LARGE SCALE GENOMIC DNA]</scope>
    <source>
        <strain>ATCC 700532 / DSM 15464 / FAM18</strain>
    </source>
</reference>
<sequence>MLDREGYRPNVGIILTNNRDEVFWGKRVREHSWQFPQGGIKPGESPETAMYRELYEEVGLLSQHVKIVGRTRDWLRYDVPNNWVRREWRGSYRGQKQIWYLLRLTGRDCDVNLRATRHPEFDGWRWHQYWAPVDEVIDFKRDVYLGALKELSSRFLRGMESYEDFAARQLSGNR</sequence>
<keyword id="KW-0378">Hydrolase</keyword>
<comment type="function">
    <text evidence="1">Accelerates the degradation of transcripts by removing pyrophosphate from the 5'-end of triphosphorylated RNA, leading to a more labile monophosphorylated state that can stimulate subsequent ribonuclease cleavage.</text>
</comment>
<comment type="cofactor">
    <cofactor evidence="1">
        <name>a divalent metal cation</name>
        <dbReference type="ChEBI" id="CHEBI:60240"/>
    </cofactor>
</comment>
<comment type="similarity">
    <text evidence="1">Belongs to the Nudix hydrolase family. RppH subfamily.</text>
</comment>
<feature type="chain" id="PRO_1000021963" description="RNA pyrophosphohydrolase">
    <location>
        <begin position="1"/>
        <end position="174"/>
    </location>
</feature>
<feature type="domain" description="Nudix hydrolase" evidence="1">
    <location>
        <begin position="6"/>
        <end position="149"/>
    </location>
</feature>
<feature type="short sequence motif" description="Nudix box">
    <location>
        <begin position="38"/>
        <end position="59"/>
    </location>
</feature>
<protein>
    <recommendedName>
        <fullName evidence="1">RNA pyrophosphohydrolase</fullName>
        <ecNumber evidence="1">3.6.1.-</ecNumber>
    </recommendedName>
    <alternativeName>
        <fullName evidence="1">(Di)nucleoside polyphosphate hydrolase</fullName>
    </alternativeName>
</protein>
<accession>A1KV92</accession>
<name>RPPH_NEIMF</name>
<evidence type="ECO:0000255" key="1">
    <source>
        <dbReference type="HAMAP-Rule" id="MF_00298"/>
    </source>
</evidence>
<organism>
    <name type="scientific">Neisseria meningitidis serogroup C / serotype 2a (strain ATCC 700532 / DSM 15464 / FAM18)</name>
    <dbReference type="NCBI Taxonomy" id="272831"/>
    <lineage>
        <taxon>Bacteria</taxon>
        <taxon>Pseudomonadati</taxon>
        <taxon>Pseudomonadota</taxon>
        <taxon>Betaproteobacteria</taxon>
        <taxon>Neisseriales</taxon>
        <taxon>Neisseriaceae</taxon>
        <taxon>Neisseria</taxon>
    </lineage>
</organism>
<dbReference type="EC" id="3.6.1.-" evidence="1"/>
<dbReference type="EMBL" id="AM421808">
    <property type="protein sequence ID" value="CAM10793.1"/>
    <property type="molecule type" value="Genomic_DNA"/>
</dbReference>
<dbReference type="RefSeq" id="WP_002236053.1">
    <property type="nucleotide sequence ID" value="NC_008767.1"/>
</dbReference>
<dbReference type="SMR" id="A1KV92"/>
<dbReference type="KEGG" id="nmc:NMC1601"/>
<dbReference type="HOGENOM" id="CLU_087195_3_1_4"/>
<dbReference type="Proteomes" id="UP000002286">
    <property type="component" value="Chromosome"/>
</dbReference>
<dbReference type="GO" id="GO:0016462">
    <property type="term" value="F:pyrophosphatase activity"/>
    <property type="evidence" value="ECO:0007669"/>
    <property type="project" value="UniProtKB-ARBA"/>
</dbReference>
<dbReference type="CDD" id="cd03671">
    <property type="entry name" value="NUDIX_Ap4A_hydrolase_plant_like"/>
    <property type="match status" value="1"/>
</dbReference>
<dbReference type="FunFam" id="3.90.79.10:FF:000001">
    <property type="entry name" value="RNA pyrophosphohydrolase"/>
    <property type="match status" value="1"/>
</dbReference>
<dbReference type="Gene3D" id="3.90.79.10">
    <property type="entry name" value="Nucleoside Triphosphate Pyrophosphohydrolase"/>
    <property type="match status" value="1"/>
</dbReference>
<dbReference type="HAMAP" id="MF_00298">
    <property type="entry name" value="Nudix_RppH"/>
    <property type="match status" value="1"/>
</dbReference>
<dbReference type="InterPro" id="IPR020476">
    <property type="entry name" value="Nudix_hydrolase"/>
</dbReference>
<dbReference type="InterPro" id="IPR015797">
    <property type="entry name" value="NUDIX_hydrolase-like_dom_sf"/>
</dbReference>
<dbReference type="InterPro" id="IPR020084">
    <property type="entry name" value="NUDIX_hydrolase_CS"/>
</dbReference>
<dbReference type="InterPro" id="IPR000086">
    <property type="entry name" value="NUDIX_hydrolase_dom"/>
</dbReference>
<dbReference type="InterPro" id="IPR022927">
    <property type="entry name" value="RppH"/>
</dbReference>
<dbReference type="NCBIfam" id="NF001935">
    <property type="entry name" value="PRK00714.1-2"/>
    <property type="match status" value="1"/>
</dbReference>
<dbReference type="NCBIfam" id="NF001937">
    <property type="entry name" value="PRK00714.1-4"/>
    <property type="match status" value="1"/>
</dbReference>
<dbReference type="NCBIfam" id="NF001938">
    <property type="entry name" value="PRK00714.1-5"/>
    <property type="match status" value="1"/>
</dbReference>
<dbReference type="PANTHER" id="PTHR43736">
    <property type="entry name" value="ADP-RIBOSE PYROPHOSPHATASE"/>
    <property type="match status" value="1"/>
</dbReference>
<dbReference type="PANTHER" id="PTHR43736:SF1">
    <property type="entry name" value="DIHYDRONEOPTERIN TRIPHOSPHATE DIPHOSPHATASE"/>
    <property type="match status" value="1"/>
</dbReference>
<dbReference type="Pfam" id="PF00293">
    <property type="entry name" value="NUDIX"/>
    <property type="match status" value="1"/>
</dbReference>
<dbReference type="PRINTS" id="PR00502">
    <property type="entry name" value="NUDIXFAMILY"/>
</dbReference>
<dbReference type="SUPFAM" id="SSF55811">
    <property type="entry name" value="Nudix"/>
    <property type="match status" value="1"/>
</dbReference>
<dbReference type="PROSITE" id="PS51462">
    <property type="entry name" value="NUDIX"/>
    <property type="match status" value="1"/>
</dbReference>
<dbReference type="PROSITE" id="PS00893">
    <property type="entry name" value="NUDIX_BOX"/>
    <property type="match status" value="1"/>
</dbReference>
<proteinExistence type="inferred from homology"/>